<comment type="function">
    <text evidence="1">Broad-specificity nucleoside monophosphate (NMP) kinase that catalyzes the reversible transfer of the terminal phosphate group between nucleoside triphosphates and monophosphates. Also has ATPase activity. Involved in the late maturation steps of the 30S ribosomal particles, specifically 16S rRNA maturation. While NMP activity is not required for ribosome maturation, ATPase activity is. Associates transiently with small ribosomal subunit protein uS11. ATP hydrolysis breaks the interaction with uS11. May temporarily remove uS11 from the ribosome to enable a conformational change of the ribosomal RNA that is needed for the final maturation step of the small ribosomal subunit.</text>
</comment>
<comment type="catalytic activity">
    <reaction evidence="1">
        <text>AMP + ATP = 2 ADP</text>
        <dbReference type="Rhea" id="RHEA:12973"/>
        <dbReference type="ChEBI" id="CHEBI:30616"/>
        <dbReference type="ChEBI" id="CHEBI:456215"/>
        <dbReference type="ChEBI" id="CHEBI:456216"/>
        <dbReference type="EC" id="2.7.4.3"/>
    </reaction>
</comment>
<comment type="catalytic activity">
    <reaction evidence="1">
        <text>ATP + H2O = ADP + phosphate + H(+)</text>
        <dbReference type="Rhea" id="RHEA:13065"/>
        <dbReference type="ChEBI" id="CHEBI:15377"/>
        <dbReference type="ChEBI" id="CHEBI:15378"/>
        <dbReference type="ChEBI" id="CHEBI:30616"/>
        <dbReference type="ChEBI" id="CHEBI:43474"/>
        <dbReference type="ChEBI" id="CHEBI:456216"/>
    </reaction>
</comment>
<comment type="subunit">
    <text evidence="1">Interacts with uS11. Not a structural component of 40S pre-ribosomes, but transiently interacts with them by binding to uS11.</text>
</comment>
<comment type="similarity">
    <text evidence="1">Belongs to the adenylate kinase family. AK6 subfamily.</text>
</comment>
<name>KAD6_METAC</name>
<keyword id="KW-0067">ATP-binding</keyword>
<keyword id="KW-0418">Kinase</keyword>
<keyword id="KW-0547">Nucleotide-binding</keyword>
<keyword id="KW-1185">Reference proteome</keyword>
<keyword id="KW-0690">Ribosome biogenesis</keyword>
<keyword id="KW-0698">rRNA processing</keyword>
<keyword id="KW-0808">Transferase</keyword>
<evidence type="ECO:0000255" key="1">
    <source>
        <dbReference type="HAMAP-Rule" id="MF_00039"/>
    </source>
</evidence>
<feature type="chain" id="PRO_0000153905" description="Putative adenylate kinase">
    <location>
        <begin position="1"/>
        <end position="186"/>
    </location>
</feature>
<feature type="region of interest" description="NMP" evidence="1">
    <location>
        <begin position="30"/>
        <end position="53"/>
    </location>
</feature>
<feature type="region of interest" description="LID" evidence="1">
    <location>
        <begin position="108"/>
        <end position="118"/>
    </location>
</feature>
<feature type="binding site" evidence="1">
    <location>
        <position position="10"/>
    </location>
    <ligand>
        <name>ATP</name>
        <dbReference type="ChEBI" id="CHEBI:30616"/>
    </ligand>
</feature>
<feature type="binding site" evidence="1">
    <location>
        <position position="12"/>
    </location>
    <ligand>
        <name>ATP</name>
        <dbReference type="ChEBI" id="CHEBI:30616"/>
    </ligand>
</feature>
<feature type="binding site" evidence="1">
    <location>
        <position position="13"/>
    </location>
    <ligand>
        <name>ATP</name>
        <dbReference type="ChEBI" id="CHEBI:30616"/>
    </ligand>
</feature>
<feature type="binding site" evidence="1">
    <location>
        <position position="14"/>
    </location>
    <ligand>
        <name>ATP</name>
        <dbReference type="ChEBI" id="CHEBI:30616"/>
    </ligand>
</feature>
<feature type="binding site" evidence="1">
    <location>
        <position position="15"/>
    </location>
    <ligand>
        <name>ATP</name>
        <dbReference type="ChEBI" id="CHEBI:30616"/>
    </ligand>
</feature>
<feature type="binding site" evidence="1">
    <location>
        <position position="109"/>
    </location>
    <ligand>
        <name>ATP</name>
        <dbReference type="ChEBI" id="CHEBI:30616"/>
    </ligand>
</feature>
<dbReference type="EC" id="2.7.4.3" evidence="1"/>
<dbReference type="EMBL" id="AE010299">
    <property type="protein sequence ID" value="AAM07082.1"/>
    <property type="molecule type" value="Genomic_DNA"/>
</dbReference>
<dbReference type="RefSeq" id="WP_011023634.1">
    <property type="nucleotide sequence ID" value="NC_003552.1"/>
</dbReference>
<dbReference type="SMR" id="Q8TJQ0"/>
<dbReference type="FunCoup" id="Q8TJQ0">
    <property type="interactions" value="208"/>
</dbReference>
<dbReference type="STRING" id="188937.MA_3730"/>
<dbReference type="EnsemblBacteria" id="AAM07082">
    <property type="protein sequence ID" value="AAM07082"/>
    <property type="gene ID" value="MA_3730"/>
</dbReference>
<dbReference type="GeneID" id="1475623"/>
<dbReference type="KEGG" id="mac:MA_3730"/>
<dbReference type="HOGENOM" id="CLU_079096_0_1_2"/>
<dbReference type="InParanoid" id="Q8TJQ0"/>
<dbReference type="OrthoDB" id="8730at2157"/>
<dbReference type="PhylomeDB" id="Q8TJQ0"/>
<dbReference type="Proteomes" id="UP000002487">
    <property type="component" value="Chromosome"/>
</dbReference>
<dbReference type="GO" id="GO:0004017">
    <property type="term" value="F:adenylate kinase activity"/>
    <property type="evidence" value="ECO:0007669"/>
    <property type="project" value="UniProtKB-UniRule"/>
</dbReference>
<dbReference type="GO" id="GO:0005524">
    <property type="term" value="F:ATP binding"/>
    <property type="evidence" value="ECO:0007669"/>
    <property type="project" value="UniProtKB-UniRule"/>
</dbReference>
<dbReference type="GO" id="GO:0016887">
    <property type="term" value="F:ATP hydrolysis activity"/>
    <property type="evidence" value="ECO:0007669"/>
    <property type="project" value="InterPro"/>
</dbReference>
<dbReference type="GO" id="GO:0042274">
    <property type="term" value="P:ribosomal small subunit biogenesis"/>
    <property type="evidence" value="ECO:0007669"/>
    <property type="project" value="UniProtKB-UniRule"/>
</dbReference>
<dbReference type="GO" id="GO:0006364">
    <property type="term" value="P:rRNA processing"/>
    <property type="evidence" value="ECO:0007669"/>
    <property type="project" value="UniProtKB-KW"/>
</dbReference>
<dbReference type="Gene3D" id="3.40.50.300">
    <property type="entry name" value="P-loop containing nucleotide triphosphate hydrolases"/>
    <property type="match status" value="1"/>
</dbReference>
<dbReference type="HAMAP" id="MF_00039">
    <property type="entry name" value="Adenylate_kinase_AK6"/>
    <property type="match status" value="1"/>
</dbReference>
<dbReference type="InterPro" id="IPR020618">
    <property type="entry name" value="Adenyl_kinase_AK6"/>
</dbReference>
<dbReference type="InterPro" id="IPR027417">
    <property type="entry name" value="P-loop_NTPase"/>
</dbReference>
<dbReference type="PANTHER" id="PTHR12595:SF0">
    <property type="entry name" value="ADENYLATE KINASE ISOENZYME 6"/>
    <property type="match status" value="1"/>
</dbReference>
<dbReference type="PANTHER" id="PTHR12595">
    <property type="entry name" value="POS9-ACTIVATING FACTOR FAP7-RELATED"/>
    <property type="match status" value="1"/>
</dbReference>
<dbReference type="Pfam" id="PF13238">
    <property type="entry name" value="AAA_18"/>
    <property type="match status" value="1"/>
</dbReference>
<dbReference type="SUPFAM" id="SSF52540">
    <property type="entry name" value="P-loop containing nucleoside triphosphate hydrolases"/>
    <property type="match status" value="1"/>
</dbReference>
<accession>Q8TJQ0</accession>
<reference key="1">
    <citation type="journal article" date="2002" name="Genome Res.">
        <title>The genome of Methanosarcina acetivorans reveals extensive metabolic and physiological diversity.</title>
        <authorList>
            <person name="Galagan J.E."/>
            <person name="Nusbaum C."/>
            <person name="Roy A."/>
            <person name="Endrizzi M.G."/>
            <person name="Macdonald P."/>
            <person name="FitzHugh W."/>
            <person name="Calvo S."/>
            <person name="Engels R."/>
            <person name="Smirnov S."/>
            <person name="Atnoor D."/>
            <person name="Brown A."/>
            <person name="Allen N."/>
            <person name="Naylor J."/>
            <person name="Stange-Thomann N."/>
            <person name="DeArellano K."/>
            <person name="Johnson R."/>
            <person name="Linton L."/>
            <person name="McEwan P."/>
            <person name="McKernan K."/>
            <person name="Talamas J."/>
            <person name="Tirrell A."/>
            <person name="Ye W."/>
            <person name="Zimmer A."/>
            <person name="Barber R.D."/>
            <person name="Cann I."/>
            <person name="Graham D.E."/>
            <person name="Grahame D.A."/>
            <person name="Guss A.M."/>
            <person name="Hedderich R."/>
            <person name="Ingram-Smith C."/>
            <person name="Kuettner H.C."/>
            <person name="Krzycki J.A."/>
            <person name="Leigh J.A."/>
            <person name="Li W."/>
            <person name="Liu J."/>
            <person name="Mukhopadhyay B."/>
            <person name="Reeve J.N."/>
            <person name="Smith K."/>
            <person name="Springer T.A."/>
            <person name="Umayam L.A."/>
            <person name="White O."/>
            <person name="White R.H."/>
            <person name="de Macario E.C."/>
            <person name="Ferry J.G."/>
            <person name="Jarrell K.F."/>
            <person name="Jing H."/>
            <person name="Macario A.J.L."/>
            <person name="Paulsen I.T."/>
            <person name="Pritchett M."/>
            <person name="Sowers K.R."/>
            <person name="Swanson R.V."/>
            <person name="Zinder S.H."/>
            <person name="Lander E."/>
            <person name="Metcalf W.W."/>
            <person name="Birren B."/>
        </authorList>
    </citation>
    <scope>NUCLEOTIDE SEQUENCE [LARGE SCALE GENOMIC DNA]</scope>
    <source>
        <strain>ATCC 35395 / DSM 2834 / JCM 12185 / C2A</strain>
    </source>
</reference>
<protein>
    <recommendedName>
        <fullName evidence="1">Putative adenylate kinase</fullName>
        <shortName evidence="1">AK</shortName>
        <ecNumber evidence="1">2.7.4.3</ecNumber>
    </recommendedName>
    <alternativeName>
        <fullName evidence="1">ATP-AMP transphosphorylase</fullName>
    </alternativeName>
</protein>
<organism>
    <name type="scientific">Methanosarcina acetivorans (strain ATCC 35395 / DSM 2834 / JCM 12185 / C2A)</name>
    <dbReference type="NCBI Taxonomy" id="188937"/>
    <lineage>
        <taxon>Archaea</taxon>
        <taxon>Methanobacteriati</taxon>
        <taxon>Methanobacteriota</taxon>
        <taxon>Stenosarchaea group</taxon>
        <taxon>Methanomicrobia</taxon>
        <taxon>Methanosarcinales</taxon>
        <taxon>Methanosarcinaceae</taxon>
        <taxon>Methanosarcina</taxon>
    </lineage>
</organism>
<proteinExistence type="inferred from homology"/>
<gene>
    <name type="ordered locus">MA_3730</name>
</gene>
<sequence length="186" mass="21160">MLIGLTGTPGTGKTSVSKLLEKKRQWKIIHLNELIKEEHLYTEVDEKRDSVVADMELVRSRLPELINEMEKEPANKVVILESHLAHYITDIVIVLRAYPPELKKRLEKRGYSEEKVNENAEAESIDLILAEAFEWCDKVFEINTTGRTAEETAGDVEKIIDSLLSGKEEQLQEYGPGSLDWIDSVP</sequence>